<reference key="1">
    <citation type="journal article" date="2018" name="Toxicon">
        <title>Conopeptides promote itch through human itch receptor hMgprX1.</title>
        <authorList>
            <person name="Espino S.S."/>
            <person name="Robinson S.D."/>
            <person name="Safavi-Hemami H."/>
            <person name="Gajewiak J."/>
            <person name="Yang W."/>
            <person name="Olivera B.M."/>
            <person name="Liu Q."/>
        </authorList>
    </citation>
    <scope>NUCLEOTIDE SEQUENCE [MRNA]</scope>
    <scope>FUNCTION</scope>
    <scope>BIOASSAY</scope>
    <scope>SYNTHESIS OF 26-43</scope>
</reference>
<reference key="2">
    <citation type="journal article" date="2021" name="J. Nat. Prod.">
        <title>Discovery of a potent conorfamide from Conus episcopatus using a novel zebrafish larvae assay.</title>
        <authorList>
            <person name="Bosse G.D."/>
            <person name="Urcino C."/>
            <person name="Watkins M."/>
            <person name="Florez Salcedo P."/>
            <person name="Kozel S."/>
            <person name="Chase K."/>
            <person name="Cabang A."/>
            <person name="Espino S.S."/>
            <person name="Safavi-Hemami H."/>
            <person name="Raghuraman S."/>
            <person name="Olivera B.M."/>
            <person name="Peterson R.T."/>
            <person name="Gajewiak J."/>
        </authorList>
    </citation>
    <scope>FUNCTION</scope>
    <scope>SYNTHESIS OF 26-43</scope>
</reference>
<organism>
    <name type="scientific">Conus textile</name>
    <name type="common">Cloth-of-gold cone</name>
    <dbReference type="NCBI Taxonomy" id="6494"/>
    <lineage>
        <taxon>Eukaryota</taxon>
        <taxon>Metazoa</taxon>
        <taxon>Spiralia</taxon>
        <taxon>Lophotrochozoa</taxon>
        <taxon>Mollusca</taxon>
        <taxon>Gastropoda</taxon>
        <taxon>Caenogastropoda</taxon>
        <taxon>Neogastropoda</taxon>
        <taxon>Conoidea</taxon>
        <taxon>Conidae</taxon>
        <taxon>Conus</taxon>
        <taxon>Cylinder</taxon>
    </lineage>
</organism>
<keyword id="KW-0002">3D-structure</keyword>
<keyword id="KW-0027">Amidation</keyword>
<keyword id="KW-0165">Cleavage on pair of basic residues</keyword>
<keyword id="KW-1213">G-protein coupled receptor impairing toxin</keyword>
<keyword id="KW-0528">Neurotoxin</keyword>
<keyword id="KW-0964">Secreted</keyword>
<keyword id="KW-0732">Signal</keyword>
<keyword id="KW-0800">Toxin</keyword>
<sequence>MSGRGFLLLALLLLVTVEATRVEKKHSGILLAWSGPRNRFVRIGRRDMQSPLLSERLRFRALGFRQPSSQKQ</sequence>
<protein>
    <recommendedName>
        <fullName evidence="1 5">Conorfamide-Tx2</fullName>
        <shortName evidence="5">CNF-Tx2</shortName>
    </recommendedName>
    <alternativeName>
        <fullName evidence="1 5">Cono-RFamide-Tx2</fullName>
    </alternativeName>
</protein>
<proteinExistence type="evidence at protein level"/>
<name>CRFA2_CONTE</name>
<feature type="signal peptide" evidence="2">
    <location>
        <begin position="1"/>
        <end position="19"/>
    </location>
</feature>
<feature type="propeptide" id="PRO_0000446247" evidence="7">
    <location>
        <begin position="20"/>
        <end position="25"/>
    </location>
</feature>
<feature type="peptide" id="PRO_0000446248" description="Conorfamide-Tx2" evidence="7">
    <location>
        <begin position="26"/>
        <end position="43"/>
    </location>
</feature>
<feature type="propeptide" id="PRO_0000446249" evidence="7">
    <location>
        <begin position="44"/>
        <end position="72"/>
    </location>
</feature>
<feature type="region of interest" description="Positively charged region crucial for activity against MRGPRX1 receptors" evidence="7">
    <location>
        <begin position="32"/>
        <end position="39"/>
    </location>
</feature>
<feature type="site" description="Key residue for high activating potency against MRGPRX1 receptors" evidence="7">
    <location>
        <position position="43"/>
    </location>
</feature>
<feature type="modified residue" description="Isoleucine amide" evidence="1">
    <location>
        <position position="43"/>
    </location>
</feature>
<evidence type="ECO:0000250" key="1">
    <source>
        <dbReference type="UniProtKB" id="P0DOZ7"/>
    </source>
</evidence>
<evidence type="ECO:0000255" key="2"/>
<evidence type="ECO:0000269" key="3">
    <source>
    </source>
</evidence>
<evidence type="ECO:0000269" key="4">
    <source>
    </source>
</evidence>
<evidence type="ECO:0000303" key="5">
    <source>
    </source>
</evidence>
<evidence type="ECO:0000305" key="6"/>
<evidence type="ECO:0000305" key="7">
    <source>
    </source>
</evidence>
<accession>P0DM27</accession>
<comment type="function">
    <text evidence="3 4">This peptide activates human sensory neuron-specific G-protein coupled receptors MRGPRX1, but not mouse receptors (EC(50)=0.54 uM) (PubMed:30243794). Compared with the agonist chloroquine (anti-malaria drug), it is 600-fold more potent (PubMed:30243794). In vivo, induces itch sensation, since intradermal cheek injection into humanized transgenic mouse (mouse MRGPRX1 replaced by human MRGPRX1) induces scratching (PubMed:30243794). In vivo, treatment of zebrafish larvae with high doses (10 uM) induces hypoactivity at the beginning of the experiment during the dark phase and hyperactivity in the strobe phase after one hour, even after the removal of the toxin from the solution (PubMed:33764053).</text>
</comment>
<comment type="subcellular location">
    <subcellularLocation>
        <location evidence="7">Secreted</location>
    </subcellularLocation>
</comment>
<comment type="tissue specificity">
    <text evidence="7">Expressed by the venom duct.</text>
</comment>
<comment type="miscellaneous">
    <text evidence="6">The mature peptide does not contain cysteine residue.</text>
</comment>
<comment type="similarity">
    <text evidence="6">Belongs to the FARP (FMRFamide related peptide) family.</text>
</comment>
<comment type="online information" name="Protein Spotlight">
    <link uri="https://www.proteinspotlight.org/back_issues/212/"/>
    <text>Paths of discomfort - Issue 212 of March 2019</text>
</comment>
<dbReference type="PDB" id="8JGB">
    <property type="method" value="EM"/>
    <property type="resolution" value="2.84 A"/>
    <property type="chains" value="L=26-43"/>
</dbReference>
<dbReference type="PDBsum" id="8JGB"/>
<dbReference type="EMDB" id="EMD-36229"/>
<dbReference type="SMR" id="P0DM27"/>
<dbReference type="GO" id="GO:0005576">
    <property type="term" value="C:extracellular region"/>
    <property type="evidence" value="ECO:0007669"/>
    <property type="project" value="UniProtKB-SubCell"/>
</dbReference>
<dbReference type="GO" id="GO:0090729">
    <property type="term" value="F:toxin activity"/>
    <property type="evidence" value="ECO:0007669"/>
    <property type="project" value="UniProtKB-KW"/>
</dbReference>